<sequence length="681" mass="76199">MGIPVHRVSLGDAWSSRMHPDMESERCAQSFSVERLTNILDGGAQHTALRRKVESIIHGNPQFSSKDNYFMSQNELYEAATRKRYHLQKIAQRMGWTEEGRELEYAHRALSADLNLNLQGIFLKALRSLGSEEQIAKWEPLGKTFQIISTYAQTELGHGTYLQGLETEATYDAATQEFVIHSPTVTATKWWPGDLGRSATHALILAQLICSGARRGMHAFIVPVRSLQDHTPLPGITIGDIGPKMGLQHIDNGFLKMDHVRVPRENMLSRFAQVLPDGAYIKLGTAQSNYLGMLVTRVHLLLGAILSPLQKACVIATRYSVIRHQCRLRPSDPEVKILEHQTQQQKLFPQLAMCYAFHFLATGLLEFFQQAYKNILDRDFTLLPELHALSTGTKAMMSDFCTQGAEQCRRACGGHGYSKLSGLPSLVTSVTASCTYEGENTVLYLQVARFLVKSCLQAQGFPGSTSQRSLPRSVSYLALPDLARCPAQTAADFFCPALYTAAWAHVAARLTKDSVHHLQALRQSGADEHEAWNQTTIIHLQAAKAHCYYISVKSFKEALEKLENEPAIQQVLKRLCDLHALHGILTNSGDFLHDGFLSGAQVDMARTAYMDLLPLIRKDAILLTDAFDFTDQCLNSALGCYDGNVYERLFEWAQRSPTNTQENPAYKKYIQPLLQSWRSNL</sequence>
<gene>
    <name evidence="3" type="primary">ACOX2</name>
    <name evidence="10" type="synonym">THCA</name>
</gene>
<protein>
    <recommendedName>
        <fullName evidence="3">Peroxisomal acyl-coenzyme A oxidase 2</fullName>
        <ecNumber evidence="6">1.17.99.3</ecNumber>
    </recommendedName>
    <alternativeName>
        <fullName>3-alpha,7-alpha,12-alpha-trihydroxy-5-beta-cholestanoyl-CoA 24-hydroxylase</fullName>
    </alternativeName>
    <alternativeName>
        <fullName evidence="7">3-alpha,7-alpha,12-alpha-trihydroxy-5-beta-cholestanoyl-CoA oxidase</fullName>
    </alternativeName>
    <alternativeName>
        <fullName evidence="2">Trihydroxycoprostanoyl-CoA oxidase</fullName>
        <shortName evidence="7">THCA-CoA oxidase</shortName>
        <shortName>THCCox</shortName>
    </alternativeName>
</protein>
<keyword id="KW-0903">Direct protein sequencing</keyword>
<keyword id="KW-0274">FAD</keyword>
<keyword id="KW-0276">Fatty acid metabolism</keyword>
<keyword id="KW-0285">Flavoprotein</keyword>
<keyword id="KW-0443">Lipid metabolism</keyword>
<keyword id="KW-0560">Oxidoreductase</keyword>
<keyword id="KW-0576">Peroxisome</keyword>
<keyword id="KW-0597">Phosphoprotein</keyword>
<keyword id="KW-1185">Reference proteome</keyword>
<accession>O02767</accession>
<proteinExistence type="evidence at protein level"/>
<comment type="function">
    <text evidence="1 6">Oxidizes the CoA esters of the bile acid intermediates di- and tri-hydroxycholestanoic acids (PubMed:9218493). Capable of oxidizing short as well as long chain 2-methyl branched fatty acids (By similarity).</text>
</comment>
<comment type="catalytic activity">
    <reaction evidence="6">
        <text>(25R)-3alpha,7alpha,12alpha-trihydroxy-5beta-cholestan-26-oyl-CoA + A + H2O = (24R,25R)-3alpha,7alpha,12alpha,24-tetrahydroxy-5beta-cholestan-26-oyl-CoA + AH2</text>
        <dbReference type="Rhea" id="RHEA:15733"/>
        <dbReference type="ChEBI" id="CHEBI:13193"/>
        <dbReference type="ChEBI" id="CHEBI:15377"/>
        <dbReference type="ChEBI" id="CHEBI:17499"/>
        <dbReference type="ChEBI" id="CHEBI:58677"/>
        <dbReference type="ChEBI" id="CHEBI:59807"/>
        <dbReference type="EC" id="1.17.99.3"/>
    </reaction>
    <physiologicalReaction direction="left-to-right" evidence="9">
        <dbReference type="Rhea" id="RHEA:15734"/>
    </physiologicalReaction>
</comment>
<comment type="catalytic activity">
    <reaction evidence="6">
        <text>(25S)-3alpha,7alpha,12alpha-trihydroxy-5beta-cholestan-26-oyl-CoA + O2 = (24E)-3alpha,7alpha,12alpha-trihydroxy-5beta-cholest-24-en-26-oyl-CoA + H2O2</text>
        <dbReference type="Rhea" id="RHEA:46728"/>
        <dbReference type="ChEBI" id="CHEBI:15379"/>
        <dbReference type="ChEBI" id="CHEBI:16240"/>
        <dbReference type="ChEBI" id="CHEBI:59879"/>
        <dbReference type="ChEBI" id="CHEBI:77251"/>
    </reaction>
    <physiologicalReaction direction="left-to-right" evidence="9">
        <dbReference type="Rhea" id="RHEA:46729"/>
    </physiologicalReaction>
</comment>
<comment type="cofactor">
    <cofactor evidence="1">
        <name>FAD</name>
        <dbReference type="ChEBI" id="CHEBI:57692"/>
    </cofactor>
</comment>
<comment type="subunit">
    <text evidence="1">Homodimer.</text>
</comment>
<comment type="subcellular location">
    <subcellularLocation>
        <location evidence="3">Peroxisome</location>
    </subcellularLocation>
</comment>
<comment type="tissue specificity">
    <text evidence="6">Liver and kidney.</text>
</comment>
<comment type="similarity">
    <text evidence="8">Belongs to the acyl-CoA oxidase family.</text>
</comment>
<evidence type="ECO:0000250" key="1">
    <source>
        <dbReference type="UniProtKB" id="P07872"/>
    </source>
</evidence>
<evidence type="ECO:0000250" key="2">
    <source>
        <dbReference type="UniProtKB" id="P97562"/>
    </source>
</evidence>
<evidence type="ECO:0000250" key="3">
    <source>
        <dbReference type="UniProtKB" id="Q99424"/>
    </source>
</evidence>
<evidence type="ECO:0000250" key="4">
    <source>
        <dbReference type="UniProtKB" id="Q9QXD1"/>
    </source>
</evidence>
<evidence type="ECO:0000255" key="5"/>
<evidence type="ECO:0000269" key="6">
    <source>
    </source>
</evidence>
<evidence type="ECO:0000303" key="7">
    <source>
    </source>
</evidence>
<evidence type="ECO:0000305" key="8"/>
<evidence type="ECO:0000305" key="9">
    <source>
    </source>
</evidence>
<evidence type="ECO:0000312" key="10">
    <source>
        <dbReference type="EMBL" id="CAA73728.1"/>
    </source>
</evidence>
<dbReference type="EC" id="1.17.99.3" evidence="6"/>
<dbReference type="EMBL" id="Y13279">
    <property type="protein sequence ID" value="CAA73728.1"/>
    <property type="molecule type" value="mRNA"/>
</dbReference>
<dbReference type="RefSeq" id="NP_001076232.1">
    <property type="nucleotide sequence ID" value="NM_001082763.1"/>
</dbReference>
<dbReference type="SMR" id="O02767"/>
<dbReference type="FunCoup" id="O02767">
    <property type="interactions" value="163"/>
</dbReference>
<dbReference type="STRING" id="9986.ENSOCUP00000003596"/>
<dbReference type="SwissLipids" id="SLP:000001293"/>
<dbReference type="PaxDb" id="9986-ENSOCUP00000003596"/>
<dbReference type="GeneID" id="100009549"/>
<dbReference type="KEGG" id="ocu:100009549"/>
<dbReference type="CTD" id="8309"/>
<dbReference type="eggNOG" id="KOG0136">
    <property type="taxonomic scope" value="Eukaryota"/>
</dbReference>
<dbReference type="InParanoid" id="O02767"/>
<dbReference type="OrthoDB" id="538336at2759"/>
<dbReference type="BRENDA" id="1.17.99.3">
    <property type="organism ID" value="1749"/>
</dbReference>
<dbReference type="Proteomes" id="UP000001811">
    <property type="component" value="Unplaced"/>
</dbReference>
<dbReference type="GO" id="GO:0005777">
    <property type="term" value="C:peroxisome"/>
    <property type="evidence" value="ECO:0000250"/>
    <property type="project" value="UniProtKB"/>
</dbReference>
<dbReference type="GO" id="GO:0033791">
    <property type="term" value="F:3alpha,7alpha,12alpha-trihydroxy-5beta-cholestanoyl-CoA 24-hydroxylase activity"/>
    <property type="evidence" value="ECO:0000314"/>
    <property type="project" value="UniProtKB"/>
</dbReference>
<dbReference type="GO" id="GO:0071949">
    <property type="term" value="F:FAD binding"/>
    <property type="evidence" value="ECO:0007669"/>
    <property type="project" value="InterPro"/>
</dbReference>
<dbReference type="GO" id="GO:0005504">
    <property type="term" value="F:fatty acid binding"/>
    <property type="evidence" value="ECO:0007669"/>
    <property type="project" value="TreeGrafter"/>
</dbReference>
<dbReference type="GO" id="GO:0050660">
    <property type="term" value="F:flavin adenine dinucleotide binding"/>
    <property type="evidence" value="ECO:0000250"/>
    <property type="project" value="UniProtKB"/>
</dbReference>
<dbReference type="GO" id="GO:0016401">
    <property type="term" value="F:palmitoyl-CoA oxidase activity"/>
    <property type="evidence" value="ECO:0007669"/>
    <property type="project" value="TreeGrafter"/>
</dbReference>
<dbReference type="GO" id="GO:0042803">
    <property type="term" value="F:protein homodimerization activity"/>
    <property type="evidence" value="ECO:0000250"/>
    <property type="project" value="UniProtKB"/>
</dbReference>
<dbReference type="GO" id="GO:0006699">
    <property type="term" value="P:bile acid biosynthetic process"/>
    <property type="evidence" value="ECO:0000250"/>
    <property type="project" value="UniProtKB"/>
</dbReference>
<dbReference type="GO" id="GO:0033540">
    <property type="term" value="P:fatty acid beta-oxidation using acyl-CoA oxidase"/>
    <property type="evidence" value="ECO:0007669"/>
    <property type="project" value="TreeGrafter"/>
</dbReference>
<dbReference type="GO" id="GO:0055088">
    <property type="term" value="P:lipid homeostasis"/>
    <property type="evidence" value="ECO:0007669"/>
    <property type="project" value="TreeGrafter"/>
</dbReference>
<dbReference type="GO" id="GO:0000038">
    <property type="term" value="P:very long-chain fatty acid metabolic process"/>
    <property type="evidence" value="ECO:0007669"/>
    <property type="project" value="TreeGrafter"/>
</dbReference>
<dbReference type="FunFam" id="1.10.540.10:FF:000006">
    <property type="entry name" value="Acyl-coenzyme A oxidase"/>
    <property type="match status" value="1"/>
</dbReference>
<dbReference type="FunFam" id="1.20.140.10:FF:000005">
    <property type="entry name" value="Acyl-coenzyme A oxidase"/>
    <property type="match status" value="1"/>
</dbReference>
<dbReference type="FunFam" id="1.20.140.10:FF:000007">
    <property type="entry name" value="Acyl-coenzyme A oxidase"/>
    <property type="match status" value="1"/>
</dbReference>
<dbReference type="FunFam" id="2.40.110.10:FF:000003">
    <property type="entry name" value="Acyl-coenzyme A oxidase"/>
    <property type="match status" value="1"/>
</dbReference>
<dbReference type="Gene3D" id="1.10.540.10">
    <property type="entry name" value="Acyl-CoA dehydrogenase/oxidase, N-terminal domain"/>
    <property type="match status" value="1"/>
</dbReference>
<dbReference type="Gene3D" id="2.40.110.10">
    <property type="entry name" value="Butyryl-CoA Dehydrogenase, subunit A, domain 2"/>
    <property type="match status" value="1"/>
</dbReference>
<dbReference type="Gene3D" id="1.20.140.10">
    <property type="entry name" value="Butyryl-CoA Dehydrogenase, subunit A, domain 3"/>
    <property type="match status" value="2"/>
</dbReference>
<dbReference type="InterPro" id="IPR055060">
    <property type="entry name" value="ACOX_C_alpha1"/>
</dbReference>
<dbReference type="InterPro" id="IPR029320">
    <property type="entry name" value="Acyl-CoA_ox_N"/>
</dbReference>
<dbReference type="InterPro" id="IPR046373">
    <property type="entry name" value="Acyl-CoA_Oxase/DH_mid-dom_sf"/>
</dbReference>
<dbReference type="InterPro" id="IPR012258">
    <property type="entry name" value="Acyl-CoA_oxidase"/>
</dbReference>
<dbReference type="InterPro" id="IPR002655">
    <property type="entry name" value="Acyl-CoA_oxidase_C"/>
</dbReference>
<dbReference type="InterPro" id="IPR036250">
    <property type="entry name" value="AcylCo_DH-like_C"/>
</dbReference>
<dbReference type="InterPro" id="IPR037069">
    <property type="entry name" value="AcylCoA_DH/ox_N_sf"/>
</dbReference>
<dbReference type="InterPro" id="IPR009100">
    <property type="entry name" value="AcylCoA_DH/oxidase_NM_dom_sf"/>
</dbReference>
<dbReference type="PANTHER" id="PTHR10909">
    <property type="entry name" value="ELECTRON TRANSPORT OXIDOREDUCTASE"/>
    <property type="match status" value="1"/>
</dbReference>
<dbReference type="PANTHER" id="PTHR10909:SF344">
    <property type="entry name" value="PEROXISOMAL ACYL-COENZYME A OXIDASE 2"/>
    <property type="match status" value="1"/>
</dbReference>
<dbReference type="Pfam" id="PF01756">
    <property type="entry name" value="ACOX"/>
    <property type="match status" value="1"/>
</dbReference>
<dbReference type="Pfam" id="PF22924">
    <property type="entry name" value="ACOX_C_alpha1"/>
    <property type="match status" value="1"/>
</dbReference>
<dbReference type="Pfam" id="PF14749">
    <property type="entry name" value="Acyl-CoA_ox_N"/>
    <property type="match status" value="1"/>
</dbReference>
<dbReference type="PIRSF" id="PIRSF000168">
    <property type="entry name" value="Acyl-CoA_oxidase"/>
    <property type="match status" value="1"/>
</dbReference>
<dbReference type="SUPFAM" id="SSF47203">
    <property type="entry name" value="Acyl-CoA dehydrogenase C-terminal domain-like"/>
    <property type="match status" value="2"/>
</dbReference>
<dbReference type="SUPFAM" id="SSF56645">
    <property type="entry name" value="Acyl-CoA dehydrogenase NM domain-like"/>
    <property type="match status" value="1"/>
</dbReference>
<reference key="1">
    <citation type="journal article" date="1997" name="J. Biol. Chem.">
        <title>Molecular cloning and expression of cDNA encoding 3alpha,7alpha,12alpha-trihydroxy-5beta-cholestanoyl-CoA oxidase from rabbit liver.</title>
        <authorList>
            <person name="Pedersen J.J."/>
            <person name="Eggertsen G."/>
            <person name="Hellman U."/>
            <person name="Andersson U."/>
            <person name="Bjoerkhem I."/>
        </authorList>
    </citation>
    <scope>NUCLEOTIDE SEQUENCE [MRNA]</scope>
    <scope>PARTIAL PROTEIN SEQUENCE</scope>
    <scope>FUNCTION</scope>
    <scope>CATALYTIC ACTIVITY</scope>
    <scope>TISSUE SPECIFICITY</scope>
    <source>
        <strain>New Zealand white</strain>
        <tissue>Liver</tissue>
    </source>
</reference>
<organism>
    <name type="scientific">Oryctolagus cuniculus</name>
    <name type="common">Rabbit</name>
    <dbReference type="NCBI Taxonomy" id="9986"/>
    <lineage>
        <taxon>Eukaryota</taxon>
        <taxon>Metazoa</taxon>
        <taxon>Chordata</taxon>
        <taxon>Craniata</taxon>
        <taxon>Vertebrata</taxon>
        <taxon>Euteleostomi</taxon>
        <taxon>Mammalia</taxon>
        <taxon>Eutheria</taxon>
        <taxon>Euarchontoglires</taxon>
        <taxon>Glires</taxon>
        <taxon>Lagomorpha</taxon>
        <taxon>Leporidae</taxon>
        <taxon>Oryctolagus</taxon>
    </lineage>
</organism>
<feature type="chain" id="PRO_0000204683" description="Peroxisomal acyl-coenzyme A oxidase 2">
    <location>
        <begin position="1"/>
        <end position="681"/>
    </location>
</feature>
<feature type="short sequence motif" description="Microbody targeting signal" evidence="5">
    <location>
        <begin position="679"/>
        <end position="681"/>
    </location>
</feature>
<feature type="modified residue" description="Phosphoserine" evidence="3">
    <location>
        <position position="9"/>
    </location>
</feature>
<feature type="modified residue" description="N6-succinyllysine" evidence="4">
    <location>
        <position position="66"/>
    </location>
</feature>
<feature type="modified residue" description="N6-succinyllysine" evidence="4">
    <location>
        <position position="137"/>
    </location>
</feature>
<feature type="modified residue" description="N6-succinyllysine" evidence="4">
    <location>
        <position position="453"/>
    </location>
</feature>
<feature type="modified residue" description="N6-succinyllysine" evidence="4">
    <location>
        <position position="561"/>
    </location>
</feature>
<feature type="modified residue" description="N6-succinyllysine" evidence="4">
    <location>
        <position position="667"/>
    </location>
</feature>
<name>ACOX2_RABIT</name>